<accession>Q8L3W1</accession>
<accession>Q9LJ67</accession>
<keyword id="KW-0002">3D-structure</keyword>
<keyword id="KW-0238">DNA-binding</keyword>
<keyword id="KW-0539">Nucleus</keyword>
<keyword id="KW-1185">Reference proteome</keyword>
<keyword id="KW-0677">Repeat</keyword>
<keyword id="KW-0804">Transcription</keyword>
<keyword id="KW-0805">Transcription regulation</keyword>
<feature type="chain" id="PRO_0000375120" description="B3 domain-containing transcription factor VRN1">
    <location>
        <begin position="1"/>
        <end position="341"/>
    </location>
</feature>
<feature type="DNA-binding region" description="TF-B3 1" evidence="1">
    <location>
        <begin position="5"/>
        <end position="98"/>
    </location>
</feature>
<feature type="DNA-binding region" description="TF-B3 2" evidence="1 4 9">
    <location>
        <begin position="244"/>
        <end position="338"/>
    </location>
</feature>
<feature type="region of interest" description="Disordered" evidence="2">
    <location>
        <begin position="166"/>
        <end position="223"/>
    </location>
</feature>
<feature type="compositionally biased region" description="Basic residues" evidence="2">
    <location>
        <begin position="179"/>
        <end position="188"/>
    </location>
</feature>
<feature type="compositionally biased region" description="Basic and acidic residues" evidence="2">
    <location>
        <begin position="200"/>
        <end position="211"/>
    </location>
</feature>
<feature type="mutagenesis site" description="Reduced ability to bind DNA. Lost ability to bind DNA; when associated with E-289 and E-296." evidence="4">
    <original>R</original>
    <variation>E</variation>
    <location>
        <position position="249"/>
    </location>
</feature>
<feature type="mutagenesis site" description="Reduced ability to bind DNA. Lost ability to bind DNA; when associated with E-249 and E-296." evidence="4">
    <original>R</original>
    <variation>E</variation>
    <location>
        <position position="289"/>
    </location>
</feature>
<feature type="mutagenesis site" description="Reduced ability to bind DNA. Lost ability to bind DNA; when associated with E-249 and E-289." evidence="4">
    <original>R</original>
    <variation>E</variation>
    <location>
        <position position="296"/>
    </location>
</feature>
<feature type="helix" evidence="10">
    <location>
        <begin position="224"/>
        <end position="236"/>
    </location>
</feature>
<feature type="strand" evidence="10">
    <location>
        <begin position="243"/>
        <end position="247"/>
    </location>
</feature>
<feature type="helix" evidence="10">
    <location>
        <begin position="250"/>
        <end position="252"/>
    </location>
</feature>
<feature type="helix" evidence="10">
    <location>
        <begin position="263"/>
        <end position="269"/>
    </location>
</feature>
<feature type="strand" evidence="10">
    <location>
        <begin position="275"/>
        <end position="281"/>
    </location>
</feature>
<feature type="strand" evidence="10">
    <location>
        <begin position="284"/>
        <end position="293"/>
    </location>
</feature>
<feature type="strand" evidence="10">
    <location>
        <begin position="296"/>
        <end position="299"/>
    </location>
</feature>
<feature type="helix" evidence="10">
    <location>
        <begin position="303"/>
        <end position="309"/>
    </location>
</feature>
<feature type="strand" evidence="10">
    <location>
        <begin position="317"/>
        <end position="322"/>
    </location>
</feature>
<feature type="strand" evidence="10">
    <location>
        <begin position="324"/>
        <end position="327"/>
    </location>
</feature>
<feature type="strand" evidence="10">
    <location>
        <begin position="329"/>
        <end position="335"/>
    </location>
</feature>
<organism>
    <name type="scientific">Arabidopsis thaliana</name>
    <name type="common">Mouse-ear cress</name>
    <dbReference type="NCBI Taxonomy" id="3702"/>
    <lineage>
        <taxon>Eukaryota</taxon>
        <taxon>Viridiplantae</taxon>
        <taxon>Streptophyta</taxon>
        <taxon>Embryophyta</taxon>
        <taxon>Tracheophyta</taxon>
        <taxon>Spermatophyta</taxon>
        <taxon>Magnoliopsida</taxon>
        <taxon>eudicotyledons</taxon>
        <taxon>Gunneridae</taxon>
        <taxon>Pentapetalae</taxon>
        <taxon>rosids</taxon>
        <taxon>malvids</taxon>
        <taxon>Brassicales</taxon>
        <taxon>Brassicaceae</taxon>
        <taxon>Camelineae</taxon>
        <taxon>Arabidopsis</taxon>
    </lineage>
</organism>
<dbReference type="EMBL" id="AF289051">
    <property type="protein sequence ID" value="AAM76972.1"/>
    <property type="molecule type" value="Genomic_DNA"/>
</dbReference>
<dbReference type="EMBL" id="AF289052">
    <property type="protein sequence ID" value="AAM76973.1"/>
    <property type="molecule type" value="mRNA"/>
</dbReference>
<dbReference type="EMBL" id="AP000735">
    <property type="protein sequence ID" value="BAB01695.1"/>
    <property type="status" value="ALT_SEQ"/>
    <property type="molecule type" value="Genomic_DNA"/>
</dbReference>
<dbReference type="EMBL" id="CP002686">
    <property type="protein sequence ID" value="AEE76178.1"/>
    <property type="molecule type" value="Genomic_DNA"/>
</dbReference>
<dbReference type="EMBL" id="BT024731">
    <property type="protein sequence ID" value="ABD59069.1"/>
    <property type="molecule type" value="mRNA"/>
</dbReference>
<dbReference type="EMBL" id="AK230388">
    <property type="protein sequence ID" value="BAF02186.1"/>
    <property type="molecule type" value="mRNA"/>
</dbReference>
<dbReference type="EMBL" id="AB493620">
    <property type="protein sequence ID" value="BAH30458.1"/>
    <property type="molecule type" value="mRNA"/>
</dbReference>
<dbReference type="RefSeq" id="NP_188529.2">
    <property type="nucleotide sequence ID" value="NM_112785.5"/>
</dbReference>
<dbReference type="PDB" id="4I1K">
    <property type="method" value="X-ray"/>
    <property type="resolution" value="1.60 A"/>
    <property type="chains" value="A/B=208-341"/>
</dbReference>
<dbReference type="PDBsum" id="4I1K"/>
<dbReference type="BMRB" id="Q8L3W1"/>
<dbReference type="SMR" id="Q8L3W1"/>
<dbReference type="BioGRID" id="6765">
    <property type="interactions" value="4"/>
</dbReference>
<dbReference type="FunCoup" id="Q8L3W1">
    <property type="interactions" value="2910"/>
</dbReference>
<dbReference type="IntAct" id="Q8L3W1">
    <property type="interactions" value="1"/>
</dbReference>
<dbReference type="STRING" id="3702.Q8L3W1"/>
<dbReference type="GlyGen" id="Q8L3W1">
    <property type="glycosylation" value="2 sites"/>
</dbReference>
<dbReference type="iPTMnet" id="Q8L3W1"/>
<dbReference type="PaxDb" id="3702-AT3G18990.1"/>
<dbReference type="ProteomicsDB" id="242709"/>
<dbReference type="DNASU" id="821432"/>
<dbReference type="EnsemblPlants" id="AT3G18990.1">
    <property type="protein sequence ID" value="AT3G18990.1"/>
    <property type="gene ID" value="AT3G18990"/>
</dbReference>
<dbReference type="GeneID" id="821432"/>
<dbReference type="Gramene" id="AT3G18990.1">
    <property type="protein sequence ID" value="AT3G18990.1"/>
    <property type="gene ID" value="AT3G18990"/>
</dbReference>
<dbReference type="KEGG" id="ath:AT3G18990"/>
<dbReference type="Araport" id="AT3G18990"/>
<dbReference type="TAIR" id="AT3G18990">
    <property type="gene designation" value="VRN1"/>
</dbReference>
<dbReference type="eggNOG" id="ENOG502SVH3">
    <property type="taxonomic scope" value="Eukaryota"/>
</dbReference>
<dbReference type="HOGENOM" id="CLU_015069_1_1_1"/>
<dbReference type="InParanoid" id="Q8L3W1"/>
<dbReference type="OrthoDB" id="623918at2759"/>
<dbReference type="PhylomeDB" id="Q8L3W1"/>
<dbReference type="CD-CODE" id="4299E36E">
    <property type="entry name" value="Nucleolus"/>
</dbReference>
<dbReference type="CD-CODE" id="9BAE09A1">
    <property type="entry name" value="VRN1 nuclear body"/>
</dbReference>
<dbReference type="CD-CODE" id="A7832E2F">
    <property type="entry name" value="Synthetic Condensate 000252"/>
</dbReference>
<dbReference type="EvolutionaryTrace" id="Q8L3W1"/>
<dbReference type="PRO" id="PR:Q8L3W1"/>
<dbReference type="Proteomes" id="UP000006548">
    <property type="component" value="Chromosome 3"/>
</dbReference>
<dbReference type="ExpressionAtlas" id="Q8L3W1">
    <property type="expression patterns" value="baseline and differential"/>
</dbReference>
<dbReference type="GO" id="GO:0005654">
    <property type="term" value="C:nucleoplasm"/>
    <property type="evidence" value="ECO:0000314"/>
    <property type="project" value="TAIR"/>
</dbReference>
<dbReference type="GO" id="GO:0003677">
    <property type="term" value="F:DNA binding"/>
    <property type="evidence" value="ECO:0000314"/>
    <property type="project" value="UniProtKB"/>
</dbReference>
<dbReference type="GO" id="GO:0000976">
    <property type="term" value="F:transcription cis-regulatory region binding"/>
    <property type="evidence" value="ECO:0000353"/>
    <property type="project" value="TAIR"/>
</dbReference>
<dbReference type="GO" id="GO:0009909">
    <property type="term" value="P:regulation of flower development"/>
    <property type="evidence" value="ECO:0000315"/>
    <property type="project" value="UniProtKB"/>
</dbReference>
<dbReference type="GO" id="GO:0010048">
    <property type="term" value="P:vernalization response"/>
    <property type="evidence" value="ECO:0000315"/>
    <property type="project" value="TAIR"/>
</dbReference>
<dbReference type="CDD" id="cd10017">
    <property type="entry name" value="B3_DNA"/>
    <property type="match status" value="2"/>
</dbReference>
<dbReference type="FunFam" id="2.40.330.10:FF:000004">
    <property type="entry name" value="B3 domain-containing transcription factor vrn1"/>
    <property type="match status" value="1"/>
</dbReference>
<dbReference type="FunFam" id="2.40.330.10:FF:000008">
    <property type="entry name" value="Reduced vernalization response 1"/>
    <property type="match status" value="1"/>
</dbReference>
<dbReference type="Gene3D" id="2.40.330.10">
    <property type="entry name" value="DNA-binding pseudobarrel domain"/>
    <property type="match status" value="2"/>
</dbReference>
<dbReference type="InterPro" id="IPR003340">
    <property type="entry name" value="B3_DNA-bd"/>
</dbReference>
<dbReference type="InterPro" id="IPR015300">
    <property type="entry name" value="DNA-bd_pseudobarrel_sf"/>
</dbReference>
<dbReference type="InterPro" id="IPR050655">
    <property type="entry name" value="Plant_B3_domain"/>
</dbReference>
<dbReference type="PANTHER" id="PTHR31920">
    <property type="entry name" value="B3 DOMAIN-CONTAINING"/>
    <property type="match status" value="1"/>
</dbReference>
<dbReference type="PANTHER" id="PTHR31920:SF37">
    <property type="entry name" value="B3 DOMAIN-CONTAINING TRANSCRIPTION FACTOR VRN1"/>
    <property type="match status" value="1"/>
</dbReference>
<dbReference type="Pfam" id="PF02362">
    <property type="entry name" value="B3"/>
    <property type="match status" value="2"/>
</dbReference>
<dbReference type="SMART" id="SM01019">
    <property type="entry name" value="B3"/>
    <property type="match status" value="2"/>
</dbReference>
<dbReference type="SUPFAM" id="SSF101936">
    <property type="entry name" value="DNA-binding pseudobarrel domain"/>
    <property type="match status" value="2"/>
</dbReference>
<dbReference type="PROSITE" id="PS50863">
    <property type="entry name" value="B3"/>
    <property type="match status" value="2"/>
</dbReference>
<gene>
    <name evidence="5" type="primary">VRN1</name>
    <name evidence="7" type="ordered locus">At3g18990</name>
    <name evidence="8" type="ORF">K13E13.10</name>
</gene>
<proteinExistence type="evidence at protein level"/>
<name>VRN1_ARATH</name>
<sequence length="341" mass="39275">MPRPFFHKLIFSSTIQEKRLRVPDKFVSKFKDELSVAVALTVPDGHVWRVGLRKADNKIWFQDGWQEFVDRYSIRIGYLLIFRYEGNSAFSVYIFNLSHSEINYHSTGLMDSAHNHFKRARLFEDLEDEDAEVIFPSSVYPSPLPESTVPANKGYASSAIQTLFTGPVKAEEPTPTPKIPKKRGRKKKNADPEEINSSAPRDDDPENRSKFYESASARKRTVTAEERERAINAAKTFEPTNPFFRVVLRPSYLYRGCIMYLPSGFAEKYLSGISGFIKVQLAEKQWPVRCLYKAGRAKFSQGWYEFTLENNLGEGDVCVFELLRTRDFVLKVTAFRVNEYV</sequence>
<evidence type="ECO:0000255" key="1">
    <source>
        <dbReference type="PROSITE-ProRule" id="PRU00326"/>
    </source>
</evidence>
<evidence type="ECO:0000256" key="2">
    <source>
        <dbReference type="SAM" id="MobiDB-lite"/>
    </source>
</evidence>
<evidence type="ECO:0000269" key="3">
    <source>
    </source>
</evidence>
<evidence type="ECO:0000269" key="4">
    <source>
    </source>
</evidence>
<evidence type="ECO:0000303" key="5">
    <source>
    </source>
</evidence>
<evidence type="ECO:0000305" key="6"/>
<evidence type="ECO:0000312" key="7">
    <source>
        <dbReference type="Araport" id="AT3G18990"/>
    </source>
</evidence>
<evidence type="ECO:0000312" key="8">
    <source>
        <dbReference type="EMBL" id="BAB01695.1"/>
    </source>
</evidence>
<evidence type="ECO:0007744" key="9">
    <source>
        <dbReference type="PDB" id="4I1K"/>
    </source>
</evidence>
<evidence type="ECO:0007829" key="10">
    <source>
        <dbReference type="PDB" id="4I1K"/>
    </source>
</evidence>
<protein>
    <recommendedName>
        <fullName evidence="5">B3 domain-containing transcription factor VRN1</fullName>
    </recommendedName>
    <alternativeName>
        <fullName evidence="5">Protein VERNALIZATION 1</fullName>
    </alternativeName>
</protein>
<reference key="1">
    <citation type="journal article" date="2002" name="Science">
        <title>Multiple roles of Arabidopsis VRN1 in vernalization and flowering time control.</title>
        <authorList>
            <person name="Levy Y.Y."/>
            <person name="Mesnage S."/>
            <person name="Mylne J.S."/>
            <person name="Gendall A.R."/>
            <person name="Dean C."/>
        </authorList>
    </citation>
    <scope>NUCLEOTIDE SEQUENCE [GENOMIC DNA / MRNA]</scope>
    <scope>FUNCTION</scope>
    <scope>SUBCELLULAR LOCATION</scope>
    <scope>TISSUE SPECIFICITY</scope>
    <source>
        <strain>cv. Landsberg erecta</strain>
    </source>
</reference>
<reference key="2">
    <citation type="journal article" date="2000" name="DNA Res.">
        <title>Structural analysis of Arabidopsis thaliana chromosome 3. II. Sequence features of the 4,251,695 bp regions covered by 90 P1, TAC and BAC clones.</title>
        <authorList>
            <person name="Kaneko T."/>
            <person name="Katoh T."/>
            <person name="Sato S."/>
            <person name="Nakamura Y."/>
            <person name="Asamizu E."/>
            <person name="Tabata S."/>
        </authorList>
    </citation>
    <scope>NUCLEOTIDE SEQUENCE [LARGE SCALE GENOMIC DNA]</scope>
    <source>
        <strain>cv. Columbia</strain>
    </source>
</reference>
<reference key="3">
    <citation type="journal article" date="2017" name="Plant J.">
        <title>Araport11: a complete reannotation of the Arabidopsis thaliana reference genome.</title>
        <authorList>
            <person name="Cheng C.Y."/>
            <person name="Krishnakumar V."/>
            <person name="Chan A.P."/>
            <person name="Thibaud-Nissen F."/>
            <person name="Schobel S."/>
            <person name="Town C.D."/>
        </authorList>
    </citation>
    <scope>GENOME REANNOTATION</scope>
    <source>
        <strain>cv. Columbia</strain>
    </source>
</reference>
<reference key="4">
    <citation type="submission" date="2006-03" db="EMBL/GenBank/DDBJ databases">
        <title>Arabidopsis ORF clones.</title>
        <authorList>
            <person name="Shinn P."/>
            <person name="Chen H."/>
            <person name="Kim C.J."/>
            <person name="Ecker J.R."/>
        </authorList>
    </citation>
    <scope>NUCLEOTIDE SEQUENCE [LARGE SCALE MRNA]</scope>
    <source>
        <strain>cv. Columbia</strain>
    </source>
</reference>
<reference key="5">
    <citation type="submission" date="2006-07" db="EMBL/GenBank/DDBJ databases">
        <title>Large-scale analysis of RIKEN Arabidopsis full-length (RAFL) cDNAs.</title>
        <authorList>
            <person name="Totoki Y."/>
            <person name="Seki M."/>
            <person name="Ishida J."/>
            <person name="Nakajima M."/>
            <person name="Enju A."/>
            <person name="Kamiya A."/>
            <person name="Narusaka M."/>
            <person name="Shin-i T."/>
            <person name="Nakagawa M."/>
            <person name="Sakamoto N."/>
            <person name="Oishi K."/>
            <person name="Kohara Y."/>
            <person name="Kobayashi M."/>
            <person name="Toyoda A."/>
            <person name="Sakaki Y."/>
            <person name="Sakurai T."/>
            <person name="Iida K."/>
            <person name="Akiyama K."/>
            <person name="Satou M."/>
            <person name="Toyoda T."/>
            <person name="Konagaya A."/>
            <person name="Carninci P."/>
            <person name="Kawai J."/>
            <person name="Hayashizaki Y."/>
            <person name="Shinozaki K."/>
        </authorList>
    </citation>
    <scope>NUCLEOTIDE SEQUENCE [LARGE SCALE MRNA]</scope>
    <source>
        <strain>cv. Columbia</strain>
    </source>
</reference>
<reference key="6">
    <citation type="submission" date="2009-03" db="EMBL/GenBank/DDBJ databases">
        <title>ORF cloning and analysis of Arabidopsis transcription factor genes.</title>
        <authorList>
            <person name="Fujita M."/>
            <person name="Mizukado S."/>
            <person name="Seki M."/>
            <person name="Shinozaki K."/>
            <person name="Mitsuda N."/>
            <person name="Takiguchi Y."/>
            <person name="Takagi M."/>
        </authorList>
    </citation>
    <scope>NUCLEOTIDE SEQUENCE [LARGE SCALE MRNA]</scope>
</reference>
<reference key="7">
    <citation type="journal article" date="2008" name="Trends Plant Sci.">
        <title>The plant B3 superfamily.</title>
        <authorList>
            <person name="Swaminathan K."/>
            <person name="Peterson K."/>
            <person name="Jack T."/>
        </authorList>
    </citation>
    <scope>GENE FAMILY</scope>
</reference>
<reference key="8">
    <citation type="journal article" date="2013" name="J. Biol. Chem.">
        <title>The Arabidopsis B3 domain protein VERNALIZATION1 (VRN1) is involved in processes essential for development, with structural and mutational studies revealing its DNA-binding surface.</title>
        <authorList>
            <person name="King G.J."/>
            <person name="Chanson A.H."/>
            <person name="McCallum E.J."/>
            <person name="Ohme-Takagi M."/>
            <person name="Byriel K."/>
            <person name="Hill J.M."/>
            <person name="Martin J.L."/>
            <person name="Mylne J.S."/>
        </authorList>
    </citation>
    <scope>X-RAY CRYSTALLOGRAPHY (1.60 ANGSTROMS) OF 208-341</scope>
    <scope>FUNCTION</scope>
    <scope>DISRUPTION PHENOTYPE</scope>
    <scope>MUTAGENESIS OF ARG-249; ARG-289 AND ARG-296</scope>
    <scope>DNA-BINDING</scope>
    <source>
        <strain>cv. Columbia</strain>
    </source>
</reference>
<comment type="function">
    <text evidence="3 4">Essential protein (PubMed:23255593). Involved in the regulation of vernalization (PubMed:12114624). Acts as a transcriptional repressor of FLC, a major target of the vernalization pathway (PubMed:12114624). Binds DNA in vitro in a non-sequence-specific manner (PubMed:12114624).</text>
</comment>
<comment type="subcellular location">
    <subcellularLocation>
        <location evidence="1 3">Nucleus</location>
    </subcellularLocation>
</comment>
<comment type="tissue specificity">
    <text evidence="3">Expressed in roots and at lower levels in aerial parts.</text>
</comment>
<comment type="disruption phenotype">
    <text evidence="4">Reduced vernalization response.</text>
</comment>
<comment type="miscellaneous">
    <text evidence="4">Lethal when expressed constitutively.</text>
</comment>
<comment type="sequence caution" evidence="6">
    <conflict type="erroneous gene model prediction">
        <sequence resource="EMBL-CDS" id="BAB01695"/>
    </conflict>
</comment>